<evidence type="ECO:0000255" key="1">
    <source>
        <dbReference type="HAMAP-Rule" id="MF_01320"/>
    </source>
</evidence>
<evidence type="ECO:0000256" key="2">
    <source>
        <dbReference type="SAM" id="MobiDB-lite"/>
    </source>
</evidence>
<evidence type="ECO:0000305" key="3"/>
<reference key="1">
    <citation type="journal article" date="2003" name="Proc. Natl. Acad. Sci. U.S.A.">
        <title>Genome sequence of the cyanobacterium Prochlorococcus marinus SS120, a nearly minimal oxyphototrophic genome.</title>
        <authorList>
            <person name="Dufresne A."/>
            <person name="Salanoubat M."/>
            <person name="Partensky F."/>
            <person name="Artiguenave F."/>
            <person name="Axmann I.M."/>
            <person name="Barbe V."/>
            <person name="Duprat S."/>
            <person name="Galperin M.Y."/>
            <person name="Koonin E.V."/>
            <person name="Le Gall F."/>
            <person name="Makarova K.S."/>
            <person name="Ostrowski M."/>
            <person name="Oztas S."/>
            <person name="Robert C."/>
            <person name="Rogozin I.B."/>
            <person name="Scanlan D.J."/>
            <person name="Tandeau de Marsac N."/>
            <person name="Weissenbach J."/>
            <person name="Wincker P."/>
            <person name="Wolf Y.I."/>
            <person name="Hess W.R."/>
        </authorList>
    </citation>
    <scope>NUCLEOTIDE SEQUENCE [LARGE SCALE GENOMIC DNA]</scope>
    <source>
        <strain>SARG / CCMP1375 / SS120</strain>
    </source>
</reference>
<feature type="chain" id="PRO_0000129596" description="Large ribosomal subunit protein uL2">
    <location>
        <begin position="1"/>
        <end position="287"/>
    </location>
</feature>
<feature type="region of interest" description="Disordered" evidence="2">
    <location>
        <begin position="221"/>
        <end position="287"/>
    </location>
</feature>
<feature type="compositionally biased region" description="Basic residues" evidence="2">
    <location>
        <begin position="258"/>
        <end position="287"/>
    </location>
</feature>
<accession>Q7V9W5</accession>
<proteinExistence type="inferred from homology"/>
<sequence length="287" mass="31755">MAIRTFRPYTPGTRTRVVTDFNEVTGRKPERSLVIAKHRLKGRNNRGVITCRHRGGGHKRQYRLVDFRRNKHGVPAKVAAIHYDPHRNARLALLFYKDGEKRYILAPAGISIGQEVLSGKDVPIEIGNALPLSSIPLGSSVHCVELYPGRGGQMVRCAGSSAQLMAKEGEYVALKLPSTEVRLVRGECYATLGEVGNSEIRNTSLGKAGRRRWLGRRPQVRGSVMNPCDHPHGGGEGRAPVGRAGPVTPWGKPALGLKTRKRNKPSNRFVLRKRRRVSKRSRGGRDS</sequence>
<organism>
    <name type="scientific">Prochlorococcus marinus (strain SARG / CCMP1375 / SS120)</name>
    <dbReference type="NCBI Taxonomy" id="167539"/>
    <lineage>
        <taxon>Bacteria</taxon>
        <taxon>Bacillati</taxon>
        <taxon>Cyanobacteriota</taxon>
        <taxon>Cyanophyceae</taxon>
        <taxon>Synechococcales</taxon>
        <taxon>Prochlorococcaceae</taxon>
        <taxon>Prochlorococcus</taxon>
    </lineage>
</organism>
<comment type="function">
    <text evidence="1">One of the primary rRNA binding proteins. Required for association of the 30S and 50S subunits to form the 70S ribosome, for tRNA binding and peptide bond formation. It has been suggested to have peptidyltransferase activity; this is somewhat controversial. Makes several contacts with the 16S rRNA in the 70S ribosome.</text>
</comment>
<comment type="subunit">
    <text evidence="1">Part of the 50S ribosomal subunit. Forms a bridge to the 30S subunit in the 70S ribosome.</text>
</comment>
<comment type="similarity">
    <text evidence="1">Belongs to the universal ribosomal protein uL2 family.</text>
</comment>
<keyword id="KW-1185">Reference proteome</keyword>
<keyword id="KW-0687">Ribonucleoprotein</keyword>
<keyword id="KW-0689">Ribosomal protein</keyword>
<keyword id="KW-0694">RNA-binding</keyword>
<keyword id="KW-0699">rRNA-binding</keyword>
<name>RL2_PROMA</name>
<gene>
    <name evidence="1" type="primary">rplB</name>
    <name evidence="1" type="synonym">rpl2</name>
    <name type="ordered locus">Pro_1709</name>
</gene>
<protein>
    <recommendedName>
        <fullName evidence="1">Large ribosomal subunit protein uL2</fullName>
    </recommendedName>
    <alternativeName>
        <fullName evidence="3">50S ribosomal protein L2</fullName>
    </alternativeName>
</protein>
<dbReference type="EMBL" id="AE017126">
    <property type="protein sequence ID" value="AAQ00753.1"/>
    <property type="molecule type" value="Genomic_DNA"/>
</dbReference>
<dbReference type="RefSeq" id="NP_876100.1">
    <property type="nucleotide sequence ID" value="NC_005042.1"/>
</dbReference>
<dbReference type="RefSeq" id="WP_011125858.1">
    <property type="nucleotide sequence ID" value="NC_005042.1"/>
</dbReference>
<dbReference type="SMR" id="Q7V9W5"/>
<dbReference type="STRING" id="167539.Pro_1709"/>
<dbReference type="EnsemblBacteria" id="AAQ00753">
    <property type="protein sequence ID" value="AAQ00753"/>
    <property type="gene ID" value="Pro_1709"/>
</dbReference>
<dbReference type="KEGG" id="pma:Pro_1709"/>
<dbReference type="PATRIC" id="fig|167539.5.peg.1804"/>
<dbReference type="eggNOG" id="COG0090">
    <property type="taxonomic scope" value="Bacteria"/>
</dbReference>
<dbReference type="HOGENOM" id="CLU_036235_2_1_3"/>
<dbReference type="OrthoDB" id="9778722at2"/>
<dbReference type="Proteomes" id="UP000001420">
    <property type="component" value="Chromosome"/>
</dbReference>
<dbReference type="GO" id="GO:0015934">
    <property type="term" value="C:large ribosomal subunit"/>
    <property type="evidence" value="ECO:0007669"/>
    <property type="project" value="InterPro"/>
</dbReference>
<dbReference type="GO" id="GO:0019843">
    <property type="term" value="F:rRNA binding"/>
    <property type="evidence" value="ECO:0007669"/>
    <property type="project" value="UniProtKB-UniRule"/>
</dbReference>
<dbReference type="GO" id="GO:0003735">
    <property type="term" value="F:structural constituent of ribosome"/>
    <property type="evidence" value="ECO:0007669"/>
    <property type="project" value="InterPro"/>
</dbReference>
<dbReference type="GO" id="GO:0016740">
    <property type="term" value="F:transferase activity"/>
    <property type="evidence" value="ECO:0007669"/>
    <property type="project" value="InterPro"/>
</dbReference>
<dbReference type="GO" id="GO:0006412">
    <property type="term" value="P:translation"/>
    <property type="evidence" value="ECO:0007669"/>
    <property type="project" value="UniProtKB-UniRule"/>
</dbReference>
<dbReference type="FunFam" id="2.30.30.30:FF:000001">
    <property type="entry name" value="50S ribosomal protein L2"/>
    <property type="match status" value="1"/>
</dbReference>
<dbReference type="FunFam" id="2.40.50.140:FF:000003">
    <property type="entry name" value="50S ribosomal protein L2"/>
    <property type="match status" value="1"/>
</dbReference>
<dbReference type="FunFam" id="4.10.950.10:FF:000001">
    <property type="entry name" value="50S ribosomal protein L2"/>
    <property type="match status" value="1"/>
</dbReference>
<dbReference type="Gene3D" id="2.30.30.30">
    <property type="match status" value="1"/>
</dbReference>
<dbReference type="Gene3D" id="2.40.50.140">
    <property type="entry name" value="Nucleic acid-binding proteins"/>
    <property type="match status" value="1"/>
</dbReference>
<dbReference type="Gene3D" id="4.10.950.10">
    <property type="entry name" value="Ribosomal protein L2, domain 3"/>
    <property type="match status" value="1"/>
</dbReference>
<dbReference type="HAMAP" id="MF_01320_B">
    <property type="entry name" value="Ribosomal_uL2_B"/>
    <property type="match status" value="1"/>
</dbReference>
<dbReference type="InterPro" id="IPR012340">
    <property type="entry name" value="NA-bd_OB-fold"/>
</dbReference>
<dbReference type="InterPro" id="IPR014722">
    <property type="entry name" value="Rib_uL2_dom2"/>
</dbReference>
<dbReference type="InterPro" id="IPR002171">
    <property type="entry name" value="Ribosomal_uL2"/>
</dbReference>
<dbReference type="InterPro" id="IPR005880">
    <property type="entry name" value="Ribosomal_uL2_bac/org-type"/>
</dbReference>
<dbReference type="InterPro" id="IPR022669">
    <property type="entry name" value="Ribosomal_uL2_C"/>
</dbReference>
<dbReference type="InterPro" id="IPR022671">
    <property type="entry name" value="Ribosomal_uL2_CS"/>
</dbReference>
<dbReference type="InterPro" id="IPR014726">
    <property type="entry name" value="Ribosomal_uL2_dom3"/>
</dbReference>
<dbReference type="InterPro" id="IPR022666">
    <property type="entry name" value="Ribosomal_uL2_RNA-bd_dom"/>
</dbReference>
<dbReference type="InterPro" id="IPR008991">
    <property type="entry name" value="Translation_prot_SH3-like_sf"/>
</dbReference>
<dbReference type="NCBIfam" id="TIGR01171">
    <property type="entry name" value="rplB_bact"/>
    <property type="match status" value="1"/>
</dbReference>
<dbReference type="PANTHER" id="PTHR13691:SF5">
    <property type="entry name" value="LARGE RIBOSOMAL SUBUNIT PROTEIN UL2M"/>
    <property type="match status" value="1"/>
</dbReference>
<dbReference type="PANTHER" id="PTHR13691">
    <property type="entry name" value="RIBOSOMAL PROTEIN L2"/>
    <property type="match status" value="1"/>
</dbReference>
<dbReference type="Pfam" id="PF00181">
    <property type="entry name" value="Ribosomal_L2"/>
    <property type="match status" value="1"/>
</dbReference>
<dbReference type="Pfam" id="PF03947">
    <property type="entry name" value="Ribosomal_L2_C"/>
    <property type="match status" value="1"/>
</dbReference>
<dbReference type="PIRSF" id="PIRSF002158">
    <property type="entry name" value="Ribosomal_L2"/>
    <property type="match status" value="1"/>
</dbReference>
<dbReference type="SMART" id="SM01383">
    <property type="entry name" value="Ribosomal_L2"/>
    <property type="match status" value="1"/>
</dbReference>
<dbReference type="SMART" id="SM01382">
    <property type="entry name" value="Ribosomal_L2_C"/>
    <property type="match status" value="1"/>
</dbReference>
<dbReference type="SUPFAM" id="SSF50249">
    <property type="entry name" value="Nucleic acid-binding proteins"/>
    <property type="match status" value="1"/>
</dbReference>
<dbReference type="SUPFAM" id="SSF50104">
    <property type="entry name" value="Translation proteins SH3-like domain"/>
    <property type="match status" value="1"/>
</dbReference>
<dbReference type="PROSITE" id="PS00467">
    <property type="entry name" value="RIBOSOMAL_L2"/>
    <property type="match status" value="1"/>
</dbReference>